<accession>Q3BXT9</accession>
<protein>
    <recommendedName>
        <fullName evidence="1">ATP-dependent protease ATPase subunit HslU</fullName>
    </recommendedName>
    <alternativeName>
        <fullName evidence="1">Unfoldase HslU</fullName>
    </alternativeName>
</protein>
<evidence type="ECO:0000255" key="1">
    <source>
        <dbReference type="HAMAP-Rule" id="MF_00249"/>
    </source>
</evidence>
<dbReference type="EMBL" id="AM039952">
    <property type="protein sequence ID" value="CAJ22324.1"/>
    <property type="molecule type" value="Genomic_DNA"/>
</dbReference>
<dbReference type="RefSeq" id="WP_011346313.1">
    <property type="nucleotide sequence ID" value="NZ_CP017190.1"/>
</dbReference>
<dbReference type="SMR" id="Q3BXT9"/>
<dbReference type="STRING" id="456327.BJD11_19355"/>
<dbReference type="KEGG" id="xcv:XCV0693"/>
<dbReference type="eggNOG" id="COG1220">
    <property type="taxonomic scope" value="Bacteria"/>
</dbReference>
<dbReference type="HOGENOM" id="CLU_033123_0_0_6"/>
<dbReference type="Proteomes" id="UP000007069">
    <property type="component" value="Chromosome"/>
</dbReference>
<dbReference type="GO" id="GO:0009376">
    <property type="term" value="C:HslUV protease complex"/>
    <property type="evidence" value="ECO:0007669"/>
    <property type="project" value="UniProtKB-UniRule"/>
</dbReference>
<dbReference type="GO" id="GO:0005524">
    <property type="term" value="F:ATP binding"/>
    <property type="evidence" value="ECO:0007669"/>
    <property type="project" value="UniProtKB-UniRule"/>
</dbReference>
<dbReference type="GO" id="GO:0016887">
    <property type="term" value="F:ATP hydrolysis activity"/>
    <property type="evidence" value="ECO:0007669"/>
    <property type="project" value="InterPro"/>
</dbReference>
<dbReference type="GO" id="GO:0008233">
    <property type="term" value="F:peptidase activity"/>
    <property type="evidence" value="ECO:0007669"/>
    <property type="project" value="InterPro"/>
</dbReference>
<dbReference type="GO" id="GO:0036402">
    <property type="term" value="F:proteasome-activating activity"/>
    <property type="evidence" value="ECO:0007669"/>
    <property type="project" value="UniProtKB-UniRule"/>
</dbReference>
<dbReference type="GO" id="GO:0043335">
    <property type="term" value="P:protein unfolding"/>
    <property type="evidence" value="ECO:0007669"/>
    <property type="project" value="UniProtKB-UniRule"/>
</dbReference>
<dbReference type="GO" id="GO:0051603">
    <property type="term" value="P:proteolysis involved in protein catabolic process"/>
    <property type="evidence" value="ECO:0007669"/>
    <property type="project" value="TreeGrafter"/>
</dbReference>
<dbReference type="CDD" id="cd19498">
    <property type="entry name" value="RecA-like_HslU"/>
    <property type="match status" value="1"/>
</dbReference>
<dbReference type="FunFam" id="3.40.50.300:FF:000213">
    <property type="entry name" value="ATP-dependent protease ATPase subunit HslU"/>
    <property type="match status" value="1"/>
</dbReference>
<dbReference type="FunFam" id="3.40.50.300:FF:000220">
    <property type="entry name" value="ATP-dependent protease ATPase subunit HslU"/>
    <property type="match status" value="1"/>
</dbReference>
<dbReference type="Gene3D" id="1.10.8.60">
    <property type="match status" value="1"/>
</dbReference>
<dbReference type="Gene3D" id="3.40.50.300">
    <property type="entry name" value="P-loop containing nucleotide triphosphate hydrolases"/>
    <property type="match status" value="2"/>
</dbReference>
<dbReference type="HAMAP" id="MF_00249">
    <property type="entry name" value="HslU"/>
    <property type="match status" value="1"/>
</dbReference>
<dbReference type="InterPro" id="IPR003593">
    <property type="entry name" value="AAA+_ATPase"/>
</dbReference>
<dbReference type="InterPro" id="IPR050052">
    <property type="entry name" value="ATP-dep_Clp_protease_ClpX"/>
</dbReference>
<dbReference type="InterPro" id="IPR003959">
    <property type="entry name" value="ATPase_AAA_core"/>
</dbReference>
<dbReference type="InterPro" id="IPR019489">
    <property type="entry name" value="Clp_ATPase_C"/>
</dbReference>
<dbReference type="InterPro" id="IPR004491">
    <property type="entry name" value="HslU"/>
</dbReference>
<dbReference type="InterPro" id="IPR027417">
    <property type="entry name" value="P-loop_NTPase"/>
</dbReference>
<dbReference type="NCBIfam" id="TIGR00390">
    <property type="entry name" value="hslU"/>
    <property type="match status" value="1"/>
</dbReference>
<dbReference type="NCBIfam" id="NF003544">
    <property type="entry name" value="PRK05201.1"/>
    <property type="match status" value="1"/>
</dbReference>
<dbReference type="PANTHER" id="PTHR48102">
    <property type="entry name" value="ATP-DEPENDENT CLP PROTEASE ATP-BINDING SUBUNIT CLPX-LIKE, MITOCHONDRIAL-RELATED"/>
    <property type="match status" value="1"/>
</dbReference>
<dbReference type="PANTHER" id="PTHR48102:SF3">
    <property type="entry name" value="ATP-DEPENDENT PROTEASE ATPASE SUBUNIT HSLU"/>
    <property type="match status" value="1"/>
</dbReference>
<dbReference type="Pfam" id="PF00004">
    <property type="entry name" value="AAA"/>
    <property type="match status" value="1"/>
</dbReference>
<dbReference type="Pfam" id="PF07724">
    <property type="entry name" value="AAA_2"/>
    <property type="match status" value="1"/>
</dbReference>
<dbReference type="SMART" id="SM00382">
    <property type="entry name" value="AAA"/>
    <property type="match status" value="1"/>
</dbReference>
<dbReference type="SMART" id="SM01086">
    <property type="entry name" value="ClpB_D2-small"/>
    <property type="match status" value="1"/>
</dbReference>
<dbReference type="SUPFAM" id="SSF52540">
    <property type="entry name" value="P-loop containing nucleoside triphosphate hydrolases"/>
    <property type="match status" value="1"/>
</dbReference>
<reference key="1">
    <citation type="journal article" date="2005" name="J. Bacteriol.">
        <title>Insights into genome plasticity and pathogenicity of the plant pathogenic Bacterium Xanthomonas campestris pv. vesicatoria revealed by the complete genome sequence.</title>
        <authorList>
            <person name="Thieme F."/>
            <person name="Koebnik R."/>
            <person name="Bekel T."/>
            <person name="Berger C."/>
            <person name="Boch J."/>
            <person name="Buettner D."/>
            <person name="Caldana C."/>
            <person name="Gaigalat L."/>
            <person name="Goesmann A."/>
            <person name="Kay S."/>
            <person name="Kirchner O."/>
            <person name="Lanz C."/>
            <person name="Linke B."/>
            <person name="McHardy A.C."/>
            <person name="Meyer F."/>
            <person name="Mittenhuber G."/>
            <person name="Nies D.H."/>
            <person name="Niesbach-Kloesgen U."/>
            <person name="Patschkowski T."/>
            <person name="Rueckert C."/>
            <person name="Rupp O."/>
            <person name="Schneiker S."/>
            <person name="Schuster S.C."/>
            <person name="Vorhoelter F.J."/>
            <person name="Weber E."/>
            <person name="Puehler A."/>
            <person name="Bonas U."/>
            <person name="Bartels D."/>
            <person name="Kaiser O."/>
        </authorList>
    </citation>
    <scope>NUCLEOTIDE SEQUENCE [LARGE SCALE GENOMIC DNA]</scope>
    <source>
        <strain>85-10</strain>
    </source>
</reference>
<comment type="function">
    <text evidence="1">ATPase subunit of a proteasome-like degradation complex; this subunit has chaperone activity. The binding of ATP and its subsequent hydrolysis by HslU are essential for unfolding of protein substrates subsequently hydrolyzed by HslV. HslU recognizes the N-terminal part of its protein substrates and unfolds these before they are guided to HslV for hydrolysis.</text>
</comment>
<comment type="subunit">
    <text evidence="1">A double ring-shaped homohexamer of HslV is capped on each side by a ring-shaped HslU homohexamer. The assembly of the HslU/HslV complex is dependent on binding of ATP.</text>
</comment>
<comment type="subcellular location">
    <subcellularLocation>
        <location evidence="1">Cytoplasm</location>
    </subcellularLocation>
</comment>
<comment type="similarity">
    <text evidence="1">Belongs to the ClpX chaperone family. HslU subfamily.</text>
</comment>
<name>HSLU_XANE5</name>
<keyword id="KW-0067">ATP-binding</keyword>
<keyword id="KW-0143">Chaperone</keyword>
<keyword id="KW-0963">Cytoplasm</keyword>
<keyword id="KW-0547">Nucleotide-binding</keyword>
<feature type="chain" id="PRO_1000012828" description="ATP-dependent protease ATPase subunit HslU">
    <location>
        <begin position="1"/>
        <end position="455"/>
    </location>
</feature>
<feature type="binding site" evidence="1">
    <location>
        <position position="23"/>
    </location>
    <ligand>
        <name>ATP</name>
        <dbReference type="ChEBI" id="CHEBI:30616"/>
    </ligand>
</feature>
<feature type="binding site" evidence="1">
    <location>
        <begin position="65"/>
        <end position="70"/>
    </location>
    <ligand>
        <name>ATP</name>
        <dbReference type="ChEBI" id="CHEBI:30616"/>
    </ligand>
</feature>
<feature type="binding site" evidence="1">
    <location>
        <position position="266"/>
    </location>
    <ligand>
        <name>ATP</name>
        <dbReference type="ChEBI" id="CHEBI:30616"/>
    </ligand>
</feature>
<feature type="binding site" evidence="1">
    <location>
        <position position="333"/>
    </location>
    <ligand>
        <name>ATP</name>
        <dbReference type="ChEBI" id="CHEBI:30616"/>
    </ligand>
</feature>
<feature type="binding site" evidence="1">
    <location>
        <position position="405"/>
    </location>
    <ligand>
        <name>ATP</name>
        <dbReference type="ChEBI" id="CHEBI:30616"/>
    </ligand>
</feature>
<gene>
    <name evidence="1" type="primary">hslU</name>
    <name type="ordered locus">XCV0693</name>
</gene>
<sequence>MPNPDTATMTPREIVQELDRHIVGQHDAKRAVAIALRNRWRRMQLPEELRNEVMPKNILMIGPTGVGKTEIARRLATLANAPFVKVEATRFTEVGYVGKDVEQIIRDLADTSVKLYREQAKVRVRNQAEERAEDRILDALLPRRAAGIGFDPEAARNEPSSQDNETRIKFRRMLRNGELDEREIELDVAVNASMDIMTPPGMEEMGQQLRQMFSNLGSGKSQKRKLTIKAARPLLIEEEAGKLVNEDDVRTAAIEACEQHGIVFIDEIDKVAKRGEAGSSGGDVSREGVQRDLLPLVEGSNVSTKYGTVKTDHILFIASGAFHLAKPSDLIPELQGRFPIRVELTALTKADFVRILTEPKAALIKQYEALLQTEGVALTFAPDAVDRLAEIAAQVNERQENIGARRLHTVLERLLDVLSYEAPDRDGQSVTVDAAYVDAQLGELVQDPDLSRYIL</sequence>
<organism>
    <name type="scientific">Xanthomonas euvesicatoria pv. vesicatoria (strain 85-10)</name>
    <name type="common">Xanthomonas campestris pv. vesicatoria</name>
    <dbReference type="NCBI Taxonomy" id="316273"/>
    <lineage>
        <taxon>Bacteria</taxon>
        <taxon>Pseudomonadati</taxon>
        <taxon>Pseudomonadota</taxon>
        <taxon>Gammaproteobacteria</taxon>
        <taxon>Lysobacterales</taxon>
        <taxon>Lysobacteraceae</taxon>
        <taxon>Xanthomonas</taxon>
    </lineage>
</organism>
<proteinExistence type="inferred from homology"/>